<keyword id="KW-0997">Cell inner membrane</keyword>
<keyword id="KW-1003">Cell membrane</keyword>
<keyword id="KW-0350">Heme biosynthesis</keyword>
<keyword id="KW-0472">Membrane</keyword>
<keyword id="KW-1185">Reference proteome</keyword>
<keyword id="KW-0808">Transferase</keyword>
<keyword id="KW-0812">Transmembrane</keyword>
<keyword id="KW-1133">Transmembrane helix</keyword>
<dbReference type="EC" id="2.5.1.141" evidence="1"/>
<dbReference type="EMBL" id="AE004091">
    <property type="protein sequence ID" value="AAG04710.1"/>
    <property type="molecule type" value="Genomic_DNA"/>
</dbReference>
<dbReference type="PIR" id="H83480">
    <property type="entry name" value="H83480"/>
</dbReference>
<dbReference type="SMR" id="Q9I423"/>
<dbReference type="FunCoup" id="Q9I423">
    <property type="interactions" value="542"/>
</dbReference>
<dbReference type="STRING" id="208964.PA1321"/>
<dbReference type="PaxDb" id="208964-PA1321"/>
<dbReference type="KEGG" id="pae:PA1321"/>
<dbReference type="PATRIC" id="fig|208964.12.peg.1373"/>
<dbReference type="PseudoCAP" id="PA1321"/>
<dbReference type="HOGENOM" id="CLU_029631_0_0_6"/>
<dbReference type="InParanoid" id="Q9I423"/>
<dbReference type="OrthoDB" id="9814417at2"/>
<dbReference type="PhylomeDB" id="Q9I423"/>
<dbReference type="BioCyc" id="PAER208964:G1FZ6-1346-MONOMER"/>
<dbReference type="UniPathway" id="UPA00834">
    <property type="reaction ID" value="UER00712"/>
</dbReference>
<dbReference type="Proteomes" id="UP000002438">
    <property type="component" value="Chromosome"/>
</dbReference>
<dbReference type="GO" id="GO:0005886">
    <property type="term" value="C:plasma membrane"/>
    <property type="evidence" value="ECO:0000318"/>
    <property type="project" value="GO_Central"/>
</dbReference>
<dbReference type="GO" id="GO:0008495">
    <property type="term" value="F:protoheme IX farnesyltransferase activity"/>
    <property type="evidence" value="ECO:0000318"/>
    <property type="project" value="GO_Central"/>
</dbReference>
<dbReference type="GO" id="GO:0071281">
    <property type="term" value="P:cellular response to iron ion"/>
    <property type="evidence" value="ECO:0000269"/>
    <property type="project" value="CollecTF"/>
</dbReference>
<dbReference type="GO" id="GO:0048034">
    <property type="term" value="P:heme O biosynthetic process"/>
    <property type="evidence" value="ECO:0000318"/>
    <property type="project" value="GO_Central"/>
</dbReference>
<dbReference type="CDD" id="cd13957">
    <property type="entry name" value="PT_UbiA_Cox10"/>
    <property type="match status" value="1"/>
</dbReference>
<dbReference type="FunFam" id="1.10.357.140:FF:000001">
    <property type="entry name" value="Protoheme IX farnesyltransferase"/>
    <property type="match status" value="1"/>
</dbReference>
<dbReference type="Gene3D" id="1.10.357.140">
    <property type="entry name" value="UbiA prenyltransferase"/>
    <property type="match status" value="1"/>
</dbReference>
<dbReference type="HAMAP" id="MF_00154">
    <property type="entry name" value="CyoE_CtaB"/>
    <property type="match status" value="1"/>
</dbReference>
<dbReference type="InterPro" id="IPR006369">
    <property type="entry name" value="Protohaem_IX_farnesylTrfase"/>
</dbReference>
<dbReference type="InterPro" id="IPR000537">
    <property type="entry name" value="UbiA_prenyltransferase"/>
</dbReference>
<dbReference type="InterPro" id="IPR030470">
    <property type="entry name" value="UbiA_prenylTrfase_CS"/>
</dbReference>
<dbReference type="InterPro" id="IPR044878">
    <property type="entry name" value="UbiA_sf"/>
</dbReference>
<dbReference type="NCBIfam" id="TIGR01473">
    <property type="entry name" value="cyoE_ctaB"/>
    <property type="match status" value="1"/>
</dbReference>
<dbReference type="NCBIfam" id="NF003348">
    <property type="entry name" value="PRK04375.1-1"/>
    <property type="match status" value="1"/>
</dbReference>
<dbReference type="PANTHER" id="PTHR43448">
    <property type="entry name" value="PROTOHEME IX FARNESYLTRANSFERASE, MITOCHONDRIAL"/>
    <property type="match status" value="1"/>
</dbReference>
<dbReference type="PANTHER" id="PTHR43448:SF2">
    <property type="entry name" value="PROTOHEME IX FARNESYLTRANSFERASE, MITOCHONDRIAL"/>
    <property type="match status" value="1"/>
</dbReference>
<dbReference type="Pfam" id="PF01040">
    <property type="entry name" value="UbiA"/>
    <property type="match status" value="1"/>
</dbReference>
<dbReference type="PROSITE" id="PS00943">
    <property type="entry name" value="UBIA"/>
    <property type="match status" value="1"/>
</dbReference>
<comment type="function">
    <text evidence="1">Converts heme B (protoheme IX) to heme O by substitution of the vinyl group on carbon 2 of heme B porphyrin ring with a hydroxyethyl farnesyl side group.</text>
</comment>
<comment type="catalytic activity">
    <reaction evidence="1">
        <text>heme b + (2E,6E)-farnesyl diphosphate + H2O = Fe(II)-heme o + diphosphate</text>
        <dbReference type="Rhea" id="RHEA:28070"/>
        <dbReference type="ChEBI" id="CHEBI:15377"/>
        <dbReference type="ChEBI" id="CHEBI:33019"/>
        <dbReference type="ChEBI" id="CHEBI:60344"/>
        <dbReference type="ChEBI" id="CHEBI:60530"/>
        <dbReference type="ChEBI" id="CHEBI:175763"/>
        <dbReference type="EC" id="2.5.1.141"/>
    </reaction>
</comment>
<comment type="pathway">
    <text evidence="1">Porphyrin-containing compound metabolism; heme O biosynthesis; heme O from protoheme: step 1/1.</text>
</comment>
<comment type="subcellular location">
    <subcellularLocation>
        <location evidence="1">Cell inner membrane</location>
        <topology evidence="1">Multi-pass membrane protein</topology>
    </subcellularLocation>
</comment>
<comment type="miscellaneous">
    <text evidence="1">Carbon 2 of the heme B porphyrin ring is defined according to the Fischer nomenclature.</text>
</comment>
<comment type="similarity">
    <text evidence="1">Belongs to the UbiA prenyltransferase family. Protoheme IX farnesyltransferase subfamily.</text>
</comment>
<evidence type="ECO:0000255" key="1">
    <source>
        <dbReference type="HAMAP-Rule" id="MF_00154"/>
    </source>
</evidence>
<sequence>MKLKRYLLVAKPGIIFGNLIAVAGGYFLAARGSVEPMLLLATVIGLSLVVASGCVLNNCIDRDIDRHMERTRGRVTVTGQISLKAALAHGLVLGVAGFGLLWWRTNPLTTALAGFGYFVYVGLYSLWFKRRSQYGTLVGSLSGAMPPVVGYCAVSGQFDAGAASLLAIFCLWQMPHSYAIAIFRLKDYEAAGIPVLPVARGIAVTKIHIVLYILAFMAATLALCLGGYAGYGYLLVAVAVSLWWLAIALTGYWTADDRVWARKLFAFSIVAITALSVMMSIDFQVAPATHLVASLF</sequence>
<gene>
    <name evidence="1" type="primary">cyoE2</name>
    <name type="ordered locus">PA1321</name>
</gene>
<name>CYOE2_PSEAE</name>
<organism>
    <name type="scientific">Pseudomonas aeruginosa (strain ATCC 15692 / DSM 22644 / CIP 104116 / JCM 14847 / LMG 12228 / 1C / PRS 101 / PAO1)</name>
    <dbReference type="NCBI Taxonomy" id="208964"/>
    <lineage>
        <taxon>Bacteria</taxon>
        <taxon>Pseudomonadati</taxon>
        <taxon>Pseudomonadota</taxon>
        <taxon>Gammaproteobacteria</taxon>
        <taxon>Pseudomonadales</taxon>
        <taxon>Pseudomonadaceae</taxon>
        <taxon>Pseudomonas</taxon>
    </lineage>
</organism>
<protein>
    <recommendedName>
        <fullName evidence="1">Protoheme IX farnesyltransferase 2</fullName>
        <ecNumber evidence="1">2.5.1.141</ecNumber>
    </recommendedName>
    <alternativeName>
        <fullName evidence="1">Heme B farnesyltransferase 2</fullName>
    </alternativeName>
    <alternativeName>
        <fullName evidence="1">Heme O synthase 2</fullName>
    </alternativeName>
</protein>
<accession>Q9I423</accession>
<proteinExistence type="inferred from homology"/>
<reference key="1">
    <citation type="journal article" date="2000" name="Nature">
        <title>Complete genome sequence of Pseudomonas aeruginosa PAO1, an opportunistic pathogen.</title>
        <authorList>
            <person name="Stover C.K."/>
            <person name="Pham X.-Q.T."/>
            <person name="Erwin A.L."/>
            <person name="Mizoguchi S.D."/>
            <person name="Warrener P."/>
            <person name="Hickey M.J."/>
            <person name="Brinkman F.S.L."/>
            <person name="Hufnagle W.O."/>
            <person name="Kowalik D.J."/>
            <person name="Lagrou M."/>
            <person name="Garber R.L."/>
            <person name="Goltry L."/>
            <person name="Tolentino E."/>
            <person name="Westbrock-Wadman S."/>
            <person name="Yuan Y."/>
            <person name="Brody L.L."/>
            <person name="Coulter S.N."/>
            <person name="Folger K.R."/>
            <person name="Kas A."/>
            <person name="Larbig K."/>
            <person name="Lim R.M."/>
            <person name="Smith K.A."/>
            <person name="Spencer D.H."/>
            <person name="Wong G.K.-S."/>
            <person name="Wu Z."/>
            <person name="Paulsen I.T."/>
            <person name="Reizer J."/>
            <person name="Saier M.H. Jr."/>
            <person name="Hancock R.E.W."/>
            <person name="Lory S."/>
            <person name="Olson M.V."/>
        </authorList>
    </citation>
    <scope>NUCLEOTIDE SEQUENCE [LARGE SCALE GENOMIC DNA]</scope>
    <source>
        <strain>ATCC 15692 / DSM 22644 / CIP 104116 / JCM 14847 / LMG 12228 / 1C / PRS 101 / PAO1</strain>
    </source>
</reference>
<feature type="chain" id="PRO_0000287824" description="Protoheme IX farnesyltransferase 2">
    <location>
        <begin position="1"/>
        <end position="296"/>
    </location>
</feature>
<feature type="transmembrane region" description="Helical" evidence="1">
    <location>
        <begin position="7"/>
        <end position="27"/>
    </location>
</feature>
<feature type="transmembrane region" description="Helical" evidence="1">
    <location>
        <begin position="36"/>
        <end position="56"/>
    </location>
</feature>
<feature type="transmembrane region" description="Helical" evidence="1">
    <location>
        <begin position="83"/>
        <end position="103"/>
    </location>
</feature>
<feature type="transmembrane region" description="Helical" evidence="1">
    <location>
        <begin position="108"/>
        <end position="128"/>
    </location>
</feature>
<feature type="transmembrane region" description="Helical" evidence="1">
    <location>
        <begin position="134"/>
        <end position="154"/>
    </location>
</feature>
<feature type="transmembrane region" description="Helical" evidence="1">
    <location>
        <begin position="163"/>
        <end position="183"/>
    </location>
</feature>
<feature type="transmembrane region" description="Helical" evidence="1">
    <location>
        <begin position="207"/>
        <end position="227"/>
    </location>
</feature>
<feature type="transmembrane region" description="Helical" evidence="1">
    <location>
        <begin position="229"/>
        <end position="249"/>
    </location>
</feature>
<feature type="transmembrane region" description="Helical" evidence="1">
    <location>
        <begin position="265"/>
        <end position="285"/>
    </location>
</feature>